<comment type="similarity">
    <text evidence="1">Belongs to the snRNP Sm proteins family.</text>
</comment>
<accession>B6YUU5</accession>
<sequence length="78" mass="8628">MAERPLDVIHRSLDKDVLVILKKGFEFRGKLIGYDIHLNIVLAGAEMIQDGEVVKKYGKIVIRGDNVLAISPVDVGVE</sequence>
<proteinExistence type="inferred from homology"/>
<evidence type="ECO:0000255" key="1">
    <source>
        <dbReference type="HAMAP-Rule" id="MF_00257"/>
    </source>
</evidence>
<evidence type="ECO:0000255" key="2">
    <source>
        <dbReference type="PROSITE-ProRule" id="PRU01346"/>
    </source>
</evidence>
<keyword id="KW-0687">Ribonucleoprotein</keyword>
<dbReference type="EMBL" id="CP000855">
    <property type="protein sequence ID" value="ACJ16131.1"/>
    <property type="molecule type" value="Genomic_DNA"/>
</dbReference>
<dbReference type="RefSeq" id="WP_012571603.1">
    <property type="nucleotide sequence ID" value="NC_011529.1"/>
</dbReference>
<dbReference type="SMR" id="B6YUU5"/>
<dbReference type="STRING" id="523850.TON_0644"/>
<dbReference type="GeneID" id="28496376"/>
<dbReference type="GeneID" id="7016943"/>
<dbReference type="KEGG" id="ton:TON_0644"/>
<dbReference type="PATRIC" id="fig|523850.10.peg.646"/>
<dbReference type="eggNOG" id="arCOG00998">
    <property type="taxonomic scope" value="Archaea"/>
</dbReference>
<dbReference type="HOGENOM" id="CLU_076902_11_1_2"/>
<dbReference type="OrthoDB" id="371816at2157"/>
<dbReference type="Proteomes" id="UP000002727">
    <property type="component" value="Chromosome"/>
</dbReference>
<dbReference type="GO" id="GO:1990904">
    <property type="term" value="C:ribonucleoprotein complex"/>
    <property type="evidence" value="ECO:0007669"/>
    <property type="project" value="UniProtKB-KW"/>
</dbReference>
<dbReference type="GO" id="GO:0120114">
    <property type="term" value="C:Sm-like protein family complex"/>
    <property type="evidence" value="ECO:0007669"/>
    <property type="project" value="UniProtKB-ARBA"/>
</dbReference>
<dbReference type="GO" id="GO:0003723">
    <property type="term" value="F:RNA binding"/>
    <property type="evidence" value="ECO:0007669"/>
    <property type="project" value="InterPro"/>
</dbReference>
<dbReference type="GO" id="GO:0000398">
    <property type="term" value="P:mRNA splicing, via spliceosome"/>
    <property type="evidence" value="ECO:0007669"/>
    <property type="project" value="InterPro"/>
</dbReference>
<dbReference type="CDD" id="cd01731">
    <property type="entry name" value="archaeal_Sm1"/>
    <property type="match status" value="1"/>
</dbReference>
<dbReference type="Gene3D" id="2.30.30.100">
    <property type="match status" value="1"/>
</dbReference>
<dbReference type="HAMAP" id="MF_00257">
    <property type="entry name" value="Lsm_RuxX"/>
    <property type="match status" value="1"/>
</dbReference>
<dbReference type="InterPro" id="IPR016487">
    <property type="entry name" value="Lsm6/sSmF"/>
</dbReference>
<dbReference type="InterPro" id="IPR010920">
    <property type="entry name" value="LSM_dom_sf"/>
</dbReference>
<dbReference type="InterPro" id="IPR047575">
    <property type="entry name" value="Sm"/>
</dbReference>
<dbReference type="InterPro" id="IPR001163">
    <property type="entry name" value="Sm_dom_euk/arc"/>
</dbReference>
<dbReference type="InterPro" id="IPR022901">
    <property type="entry name" value="snRNP_Sm-like_arc"/>
</dbReference>
<dbReference type="NCBIfam" id="NF001963">
    <property type="entry name" value="PRK00737.1"/>
    <property type="match status" value="1"/>
</dbReference>
<dbReference type="PANTHER" id="PTHR11021:SF0">
    <property type="entry name" value="SMALL NUCLEAR RIBONUCLEOPROTEIN F"/>
    <property type="match status" value="1"/>
</dbReference>
<dbReference type="PANTHER" id="PTHR11021">
    <property type="entry name" value="SMALL NUCLEAR RIBONUCLEOPROTEIN F SNRNP-F"/>
    <property type="match status" value="1"/>
</dbReference>
<dbReference type="Pfam" id="PF01423">
    <property type="entry name" value="LSM"/>
    <property type="match status" value="1"/>
</dbReference>
<dbReference type="SMART" id="SM00651">
    <property type="entry name" value="Sm"/>
    <property type="match status" value="1"/>
</dbReference>
<dbReference type="SUPFAM" id="SSF50182">
    <property type="entry name" value="Sm-like ribonucleoproteins"/>
    <property type="match status" value="1"/>
</dbReference>
<dbReference type="PROSITE" id="PS52002">
    <property type="entry name" value="SM"/>
    <property type="match status" value="1"/>
</dbReference>
<name>RUXX_THEON</name>
<feature type="chain" id="PRO_1000114029" description="Putative snRNP Sm-like protein">
    <location>
        <begin position="1"/>
        <end position="78"/>
    </location>
</feature>
<feature type="domain" description="Sm" evidence="2">
    <location>
        <begin position="4"/>
        <end position="76"/>
    </location>
</feature>
<gene>
    <name type="ordered locus">TON_0644</name>
</gene>
<reference key="1">
    <citation type="journal article" date="2008" name="J. Bacteriol.">
        <title>The complete genome sequence of Thermococcus onnurineus NA1 reveals a mixed heterotrophic and carboxydotrophic metabolism.</title>
        <authorList>
            <person name="Lee H.S."/>
            <person name="Kang S.G."/>
            <person name="Bae S.S."/>
            <person name="Lim J.K."/>
            <person name="Cho Y."/>
            <person name="Kim Y.J."/>
            <person name="Jeon J.H."/>
            <person name="Cha S.-S."/>
            <person name="Kwon K.K."/>
            <person name="Kim H.-T."/>
            <person name="Park C.-J."/>
            <person name="Lee H.-W."/>
            <person name="Kim S.I."/>
            <person name="Chun J."/>
            <person name="Colwell R.R."/>
            <person name="Kim S.-J."/>
            <person name="Lee J.-H."/>
        </authorList>
    </citation>
    <scope>NUCLEOTIDE SEQUENCE [LARGE SCALE GENOMIC DNA]</scope>
    <source>
        <strain>NA1</strain>
    </source>
</reference>
<organism>
    <name type="scientific">Thermococcus onnurineus (strain NA1)</name>
    <dbReference type="NCBI Taxonomy" id="523850"/>
    <lineage>
        <taxon>Archaea</taxon>
        <taxon>Methanobacteriati</taxon>
        <taxon>Methanobacteriota</taxon>
        <taxon>Thermococci</taxon>
        <taxon>Thermococcales</taxon>
        <taxon>Thermococcaceae</taxon>
        <taxon>Thermococcus</taxon>
    </lineage>
</organism>
<protein>
    <recommendedName>
        <fullName evidence="1">Putative snRNP Sm-like protein</fullName>
    </recommendedName>
</protein>